<feature type="chain" id="PRO_1000001456" description="Holliday junction branch migration complex subunit RuvB">
    <location>
        <begin position="1"/>
        <end position="346"/>
    </location>
</feature>
<feature type="region of interest" description="Large ATPase domain (RuvB-L)" evidence="1">
    <location>
        <begin position="1"/>
        <end position="182"/>
    </location>
</feature>
<feature type="region of interest" description="Small ATPAse domain (RuvB-S)" evidence="1">
    <location>
        <begin position="183"/>
        <end position="253"/>
    </location>
</feature>
<feature type="region of interest" description="Head domain (RuvB-H)" evidence="1">
    <location>
        <begin position="256"/>
        <end position="346"/>
    </location>
</feature>
<feature type="binding site" evidence="1">
    <location>
        <position position="21"/>
    </location>
    <ligand>
        <name>ATP</name>
        <dbReference type="ChEBI" id="CHEBI:30616"/>
    </ligand>
</feature>
<feature type="binding site" evidence="1">
    <location>
        <position position="22"/>
    </location>
    <ligand>
        <name>ATP</name>
        <dbReference type="ChEBI" id="CHEBI:30616"/>
    </ligand>
</feature>
<feature type="binding site" evidence="1">
    <location>
        <position position="63"/>
    </location>
    <ligand>
        <name>ATP</name>
        <dbReference type="ChEBI" id="CHEBI:30616"/>
    </ligand>
</feature>
<feature type="binding site" evidence="1">
    <location>
        <position position="66"/>
    </location>
    <ligand>
        <name>ATP</name>
        <dbReference type="ChEBI" id="CHEBI:30616"/>
    </ligand>
</feature>
<feature type="binding site" evidence="1">
    <location>
        <position position="67"/>
    </location>
    <ligand>
        <name>ATP</name>
        <dbReference type="ChEBI" id="CHEBI:30616"/>
    </ligand>
</feature>
<feature type="binding site" evidence="1">
    <location>
        <position position="67"/>
    </location>
    <ligand>
        <name>Mg(2+)</name>
        <dbReference type="ChEBI" id="CHEBI:18420"/>
    </ligand>
</feature>
<feature type="binding site" evidence="1">
    <location>
        <position position="68"/>
    </location>
    <ligand>
        <name>ATP</name>
        <dbReference type="ChEBI" id="CHEBI:30616"/>
    </ligand>
</feature>
<feature type="binding site" evidence="1">
    <location>
        <begin position="129"/>
        <end position="131"/>
    </location>
    <ligand>
        <name>ATP</name>
        <dbReference type="ChEBI" id="CHEBI:30616"/>
    </ligand>
</feature>
<feature type="binding site" evidence="1">
    <location>
        <position position="172"/>
    </location>
    <ligand>
        <name>ATP</name>
        <dbReference type="ChEBI" id="CHEBI:30616"/>
    </ligand>
</feature>
<feature type="binding site" evidence="1">
    <location>
        <position position="182"/>
    </location>
    <ligand>
        <name>ATP</name>
        <dbReference type="ChEBI" id="CHEBI:30616"/>
    </ligand>
</feature>
<feature type="binding site" evidence="1">
    <location>
        <position position="219"/>
    </location>
    <ligand>
        <name>ATP</name>
        <dbReference type="ChEBI" id="CHEBI:30616"/>
    </ligand>
</feature>
<feature type="binding site" evidence="1">
    <location>
        <position position="292"/>
    </location>
    <ligand>
        <name>DNA</name>
        <dbReference type="ChEBI" id="CHEBI:16991"/>
    </ligand>
</feature>
<feature type="binding site" evidence="1">
    <location>
        <position position="311"/>
    </location>
    <ligand>
        <name>DNA</name>
        <dbReference type="ChEBI" id="CHEBI:16991"/>
    </ligand>
</feature>
<feature type="binding site" evidence="1">
    <location>
        <position position="316"/>
    </location>
    <ligand>
        <name>DNA</name>
        <dbReference type="ChEBI" id="CHEBI:16991"/>
    </ligand>
</feature>
<organism>
    <name type="scientific">Rhizobium johnstonii (strain DSM 114642 / LMG 32736 / 3841)</name>
    <name type="common">Rhizobium leguminosarum bv. viciae</name>
    <dbReference type="NCBI Taxonomy" id="216596"/>
    <lineage>
        <taxon>Bacteria</taxon>
        <taxon>Pseudomonadati</taxon>
        <taxon>Pseudomonadota</taxon>
        <taxon>Alphaproteobacteria</taxon>
        <taxon>Hyphomicrobiales</taxon>
        <taxon>Rhizobiaceae</taxon>
        <taxon>Rhizobium/Agrobacterium group</taxon>
        <taxon>Rhizobium</taxon>
        <taxon>Rhizobium johnstonii</taxon>
    </lineage>
</organism>
<comment type="function">
    <text evidence="1">The RuvA-RuvB-RuvC complex processes Holliday junction (HJ) DNA during genetic recombination and DNA repair, while the RuvA-RuvB complex plays an important role in the rescue of blocked DNA replication forks via replication fork reversal (RFR). RuvA specifically binds to HJ cruciform DNA, conferring on it an open structure. The RuvB hexamer acts as an ATP-dependent pump, pulling dsDNA into and through the RuvAB complex. RuvB forms 2 homohexamers on either side of HJ DNA bound by 1 or 2 RuvA tetramers; 4 subunits per hexamer contact DNA at a time. Coordinated motions by a converter formed by DNA-disengaged RuvB subunits stimulates ATP hydrolysis and nucleotide exchange. Immobilization of the converter enables RuvB to convert the ATP-contained energy into a lever motion, pulling 2 nucleotides of DNA out of the RuvA tetramer per ATP hydrolyzed, thus driving DNA branch migration. The RuvB motors rotate together with the DNA substrate, which together with the progressing nucleotide cycle form the mechanistic basis for DNA recombination by continuous HJ branch migration. Branch migration allows RuvC to scan DNA until it finds its consensus sequence, where it cleaves and resolves cruciform DNA.</text>
</comment>
<comment type="catalytic activity">
    <reaction evidence="1">
        <text>ATP + H2O = ADP + phosphate + H(+)</text>
        <dbReference type="Rhea" id="RHEA:13065"/>
        <dbReference type="ChEBI" id="CHEBI:15377"/>
        <dbReference type="ChEBI" id="CHEBI:15378"/>
        <dbReference type="ChEBI" id="CHEBI:30616"/>
        <dbReference type="ChEBI" id="CHEBI:43474"/>
        <dbReference type="ChEBI" id="CHEBI:456216"/>
    </reaction>
</comment>
<comment type="subunit">
    <text evidence="1">Homohexamer. Forms an RuvA(8)-RuvB(12)-Holliday junction (HJ) complex. HJ DNA is sandwiched between 2 RuvA tetramers; dsDNA enters through RuvA and exits via RuvB. An RuvB hexamer assembles on each DNA strand where it exits the tetramer. Each RuvB hexamer is contacted by two RuvA subunits (via domain III) on 2 adjacent RuvB subunits; this complex drives branch migration. In the full resolvosome a probable DNA-RuvA(4)-RuvB(12)-RuvC(2) complex forms which resolves the HJ.</text>
</comment>
<comment type="subcellular location">
    <subcellularLocation>
        <location evidence="1">Cytoplasm</location>
    </subcellularLocation>
</comment>
<comment type="domain">
    <text evidence="1">Has 3 domains, the large (RuvB-L) and small ATPase (RuvB-S) domains and the C-terminal head (RuvB-H) domain. The head domain binds DNA, while the ATPase domains jointly bind ATP, ADP or are empty depending on the state of the subunit in the translocation cycle. During a single DNA translocation step the structure of each domain remains the same, but their relative positions change.</text>
</comment>
<comment type="similarity">
    <text evidence="1">Belongs to the RuvB family.</text>
</comment>
<gene>
    <name evidence="1" type="primary">ruvB</name>
    <name type="ordered locus">RL3990</name>
</gene>
<dbReference type="EC" id="3.6.4.-" evidence="1"/>
<dbReference type="EMBL" id="AM236080">
    <property type="protein sequence ID" value="CAK09480.1"/>
    <property type="molecule type" value="Genomic_DNA"/>
</dbReference>
<dbReference type="RefSeq" id="WP_003552548.1">
    <property type="nucleotide sequence ID" value="NC_008380.1"/>
</dbReference>
<dbReference type="SMR" id="Q1MC52"/>
<dbReference type="EnsemblBacteria" id="CAK09480">
    <property type="protein sequence ID" value="CAK09480"/>
    <property type="gene ID" value="RL3990"/>
</dbReference>
<dbReference type="GeneID" id="84671608"/>
<dbReference type="KEGG" id="rle:RL3990"/>
<dbReference type="eggNOG" id="COG2255">
    <property type="taxonomic scope" value="Bacteria"/>
</dbReference>
<dbReference type="HOGENOM" id="CLU_055599_1_0_5"/>
<dbReference type="Proteomes" id="UP000006575">
    <property type="component" value="Chromosome"/>
</dbReference>
<dbReference type="GO" id="GO:0005737">
    <property type="term" value="C:cytoplasm"/>
    <property type="evidence" value="ECO:0007669"/>
    <property type="project" value="UniProtKB-SubCell"/>
</dbReference>
<dbReference type="GO" id="GO:0048476">
    <property type="term" value="C:Holliday junction resolvase complex"/>
    <property type="evidence" value="ECO:0007669"/>
    <property type="project" value="UniProtKB-UniRule"/>
</dbReference>
<dbReference type="GO" id="GO:0005524">
    <property type="term" value="F:ATP binding"/>
    <property type="evidence" value="ECO:0007669"/>
    <property type="project" value="UniProtKB-UniRule"/>
</dbReference>
<dbReference type="GO" id="GO:0016887">
    <property type="term" value="F:ATP hydrolysis activity"/>
    <property type="evidence" value="ECO:0007669"/>
    <property type="project" value="InterPro"/>
</dbReference>
<dbReference type="GO" id="GO:0000400">
    <property type="term" value="F:four-way junction DNA binding"/>
    <property type="evidence" value="ECO:0007669"/>
    <property type="project" value="UniProtKB-UniRule"/>
</dbReference>
<dbReference type="GO" id="GO:0009378">
    <property type="term" value="F:four-way junction helicase activity"/>
    <property type="evidence" value="ECO:0007669"/>
    <property type="project" value="InterPro"/>
</dbReference>
<dbReference type="GO" id="GO:0006310">
    <property type="term" value="P:DNA recombination"/>
    <property type="evidence" value="ECO:0007669"/>
    <property type="project" value="UniProtKB-UniRule"/>
</dbReference>
<dbReference type="GO" id="GO:0006281">
    <property type="term" value="P:DNA repair"/>
    <property type="evidence" value="ECO:0007669"/>
    <property type="project" value="UniProtKB-UniRule"/>
</dbReference>
<dbReference type="CDD" id="cd00009">
    <property type="entry name" value="AAA"/>
    <property type="match status" value="1"/>
</dbReference>
<dbReference type="Gene3D" id="1.10.8.60">
    <property type="match status" value="1"/>
</dbReference>
<dbReference type="Gene3D" id="3.40.50.300">
    <property type="entry name" value="P-loop containing nucleotide triphosphate hydrolases"/>
    <property type="match status" value="1"/>
</dbReference>
<dbReference type="Gene3D" id="1.10.10.10">
    <property type="entry name" value="Winged helix-like DNA-binding domain superfamily/Winged helix DNA-binding domain"/>
    <property type="match status" value="1"/>
</dbReference>
<dbReference type="HAMAP" id="MF_00016">
    <property type="entry name" value="DNA_HJ_migration_RuvB"/>
    <property type="match status" value="1"/>
</dbReference>
<dbReference type="InterPro" id="IPR003593">
    <property type="entry name" value="AAA+_ATPase"/>
</dbReference>
<dbReference type="InterPro" id="IPR041445">
    <property type="entry name" value="AAA_lid_4"/>
</dbReference>
<dbReference type="InterPro" id="IPR000641">
    <property type="entry name" value="CbxX/CfxQ"/>
</dbReference>
<dbReference type="InterPro" id="IPR004605">
    <property type="entry name" value="DNA_helicase_Holl-junc_RuvB"/>
</dbReference>
<dbReference type="InterPro" id="IPR027417">
    <property type="entry name" value="P-loop_NTPase"/>
</dbReference>
<dbReference type="InterPro" id="IPR008824">
    <property type="entry name" value="RuvB-like_N"/>
</dbReference>
<dbReference type="InterPro" id="IPR008823">
    <property type="entry name" value="RuvB_C"/>
</dbReference>
<dbReference type="InterPro" id="IPR036388">
    <property type="entry name" value="WH-like_DNA-bd_sf"/>
</dbReference>
<dbReference type="InterPro" id="IPR036390">
    <property type="entry name" value="WH_DNA-bd_sf"/>
</dbReference>
<dbReference type="NCBIfam" id="NF000868">
    <property type="entry name" value="PRK00080.1"/>
    <property type="match status" value="1"/>
</dbReference>
<dbReference type="NCBIfam" id="TIGR00635">
    <property type="entry name" value="ruvB"/>
    <property type="match status" value="1"/>
</dbReference>
<dbReference type="PANTHER" id="PTHR42848">
    <property type="match status" value="1"/>
</dbReference>
<dbReference type="PANTHER" id="PTHR42848:SF1">
    <property type="entry name" value="HOLLIDAY JUNCTION BRANCH MIGRATION COMPLEX SUBUNIT RUVB"/>
    <property type="match status" value="1"/>
</dbReference>
<dbReference type="Pfam" id="PF17864">
    <property type="entry name" value="AAA_lid_4"/>
    <property type="match status" value="1"/>
</dbReference>
<dbReference type="Pfam" id="PF05491">
    <property type="entry name" value="RuvB_C"/>
    <property type="match status" value="1"/>
</dbReference>
<dbReference type="Pfam" id="PF05496">
    <property type="entry name" value="RuvB_N"/>
    <property type="match status" value="1"/>
</dbReference>
<dbReference type="PRINTS" id="PR00819">
    <property type="entry name" value="CBXCFQXSUPER"/>
</dbReference>
<dbReference type="SMART" id="SM00382">
    <property type="entry name" value="AAA"/>
    <property type="match status" value="1"/>
</dbReference>
<dbReference type="SUPFAM" id="SSF52540">
    <property type="entry name" value="P-loop containing nucleoside triphosphate hydrolases"/>
    <property type="match status" value="1"/>
</dbReference>
<dbReference type="SUPFAM" id="SSF46785">
    <property type="entry name" value="Winged helix' DNA-binding domain"/>
    <property type="match status" value="1"/>
</dbReference>
<sequence length="346" mass="38399">MSEPARLISPEKRGEDLDITLRPQSLDEFTGQAEARANLKVFIEAAKNRGEALDHVLFVGPPGLGKTTLAQIMAKELGVNFRSTSGPVIAKAGDLAALLTNLEERDVLFIDEIHRLNPAVEEILYPAMEDFQLDLIIGEGPAARSVKIDLSKFTLVAATTRLGLLTTPLRDRFGIPVRLSFYTVEELELIVRRGARLMNLPITEEGAREIARRARGTPRIAGRLLRRVRDFAEVARAEAVTREIADEALTRLLVDNVGFDQLDKRYLNMIAVNFGGGPVGIETIAAGLSEPRDAIEDIIEPYMIQQGFIQRTPRGRVLTAIAWKHLGMQPPKDMEAAQFRLFQEDN</sequence>
<evidence type="ECO:0000255" key="1">
    <source>
        <dbReference type="HAMAP-Rule" id="MF_00016"/>
    </source>
</evidence>
<protein>
    <recommendedName>
        <fullName evidence="1">Holliday junction branch migration complex subunit RuvB</fullName>
        <ecNumber evidence="1">3.6.4.-</ecNumber>
    </recommendedName>
</protein>
<reference key="1">
    <citation type="journal article" date="2006" name="Genome Biol.">
        <title>The genome of Rhizobium leguminosarum has recognizable core and accessory components.</title>
        <authorList>
            <person name="Young J.P.W."/>
            <person name="Crossman L.C."/>
            <person name="Johnston A.W.B."/>
            <person name="Thomson N.R."/>
            <person name="Ghazoui Z.F."/>
            <person name="Hull K.H."/>
            <person name="Wexler M."/>
            <person name="Curson A.R.J."/>
            <person name="Todd J.D."/>
            <person name="Poole P.S."/>
            <person name="Mauchline T.H."/>
            <person name="East A.K."/>
            <person name="Quail M.A."/>
            <person name="Churcher C."/>
            <person name="Arrowsmith C."/>
            <person name="Cherevach I."/>
            <person name="Chillingworth T."/>
            <person name="Clarke K."/>
            <person name="Cronin A."/>
            <person name="Davis P."/>
            <person name="Fraser A."/>
            <person name="Hance Z."/>
            <person name="Hauser H."/>
            <person name="Jagels K."/>
            <person name="Moule S."/>
            <person name="Mungall K."/>
            <person name="Norbertczak H."/>
            <person name="Rabbinowitsch E."/>
            <person name="Sanders M."/>
            <person name="Simmonds M."/>
            <person name="Whitehead S."/>
            <person name="Parkhill J."/>
        </authorList>
    </citation>
    <scope>NUCLEOTIDE SEQUENCE [LARGE SCALE GENOMIC DNA]</scope>
    <source>
        <strain>DSM 114642 / LMG 32736 / 3841</strain>
    </source>
</reference>
<proteinExistence type="inferred from homology"/>
<name>RUVB_RHIJ3</name>
<keyword id="KW-0067">ATP-binding</keyword>
<keyword id="KW-0963">Cytoplasm</keyword>
<keyword id="KW-0227">DNA damage</keyword>
<keyword id="KW-0233">DNA recombination</keyword>
<keyword id="KW-0234">DNA repair</keyword>
<keyword id="KW-0238">DNA-binding</keyword>
<keyword id="KW-0378">Hydrolase</keyword>
<keyword id="KW-0547">Nucleotide-binding</keyword>
<accession>Q1MC52</accession>